<protein>
    <recommendedName>
        <fullName evidence="1">Photosystem II reaction center protein Z</fullName>
        <shortName evidence="1">PSII-Z</shortName>
    </recommendedName>
</protein>
<dbReference type="EMBL" id="CP001287">
    <property type="protein sequence ID" value="ACK66482.1"/>
    <property type="molecule type" value="Genomic_DNA"/>
</dbReference>
<dbReference type="RefSeq" id="WP_012595749.1">
    <property type="nucleotide sequence ID" value="NC_011726.1"/>
</dbReference>
<dbReference type="SMR" id="B7K3U2"/>
<dbReference type="STRING" id="41431.PCC8801_2473"/>
<dbReference type="KEGG" id="cyp:PCC8801_2473"/>
<dbReference type="eggNOG" id="ENOG5032ZB0">
    <property type="taxonomic scope" value="Bacteria"/>
</dbReference>
<dbReference type="HOGENOM" id="CLU_195286_1_0_3"/>
<dbReference type="OrthoDB" id="490783at2"/>
<dbReference type="Proteomes" id="UP000008204">
    <property type="component" value="Chromosome"/>
</dbReference>
<dbReference type="GO" id="GO:0009539">
    <property type="term" value="C:photosystem II reaction center"/>
    <property type="evidence" value="ECO:0007669"/>
    <property type="project" value="InterPro"/>
</dbReference>
<dbReference type="GO" id="GO:0031676">
    <property type="term" value="C:plasma membrane-derived thylakoid membrane"/>
    <property type="evidence" value="ECO:0007669"/>
    <property type="project" value="UniProtKB-SubCell"/>
</dbReference>
<dbReference type="GO" id="GO:0015979">
    <property type="term" value="P:photosynthesis"/>
    <property type="evidence" value="ECO:0007669"/>
    <property type="project" value="UniProtKB-UniRule"/>
</dbReference>
<dbReference type="GO" id="GO:0042549">
    <property type="term" value="P:photosystem II stabilization"/>
    <property type="evidence" value="ECO:0007669"/>
    <property type="project" value="InterPro"/>
</dbReference>
<dbReference type="Gene3D" id="1.10.287.740">
    <property type="entry name" value="Photosystem II PsbZ, reaction centre"/>
    <property type="match status" value="1"/>
</dbReference>
<dbReference type="HAMAP" id="MF_00644">
    <property type="entry name" value="PSII_PsbZ"/>
    <property type="match status" value="1"/>
</dbReference>
<dbReference type="InterPro" id="IPR002644">
    <property type="entry name" value="PSII_PsbZ"/>
</dbReference>
<dbReference type="InterPro" id="IPR036512">
    <property type="entry name" value="PSII_PsbZ_sf"/>
</dbReference>
<dbReference type="NCBIfam" id="TIGR03043">
    <property type="entry name" value="PS_II_psbZ"/>
    <property type="match status" value="1"/>
</dbReference>
<dbReference type="PANTHER" id="PTHR34971">
    <property type="entry name" value="PHOTOSYSTEM II REACTION CENTER PROTEIN Z"/>
    <property type="match status" value="1"/>
</dbReference>
<dbReference type="PANTHER" id="PTHR34971:SF2">
    <property type="entry name" value="PHOTOSYSTEM II REACTION CENTER PROTEIN Z"/>
    <property type="match status" value="1"/>
</dbReference>
<dbReference type="Pfam" id="PF01737">
    <property type="entry name" value="Ycf9"/>
    <property type="match status" value="1"/>
</dbReference>
<dbReference type="SUPFAM" id="SSF161055">
    <property type="entry name" value="PsbZ-like"/>
    <property type="match status" value="1"/>
</dbReference>
<keyword id="KW-0472">Membrane</keyword>
<keyword id="KW-0602">Photosynthesis</keyword>
<keyword id="KW-0604">Photosystem II</keyword>
<keyword id="KW-0674">Reaction center</keyword>
<keyword id="KW-1185">Reference proteome</keyword>
<keyword id="KW-0793">Thylakoid</keyword>
<keyword id="KW-0812">Transmembrane</keyword>
<keyword id="KW-1133">Transmembrane helix</keyword>
<gene>
    <name evidence="1" type="primary">psbZ</name>
    <name type="ordered locus">PCC8801_2473</name>
</gene>
<evidence type="ECO:0000255" key="1">
    <source>
        <dbReference type="HAMAP-Rule" id="MF_00644"/>
    </source>
</evidence>
<reference key="1">
    <citation type="journal article" date="2011" name="MBio">
        <title>Novel metabolic attributes of the genus Cyanothece, comprising a group of unicellular nitrogen-fixing Cyanobacteria.</title>
        <authorList>
            <person name="Bandyopadhyay A."/>
            <person name="Elvitigala T."/>
            <person name="Welsh E."/>
            <person name="Stockel J."/>
            <person name="Liberton M."/>
            <person name="Min H."/>
            <person name="Sherman L.A."/>
            <person name="Pakrasi H.B."/>
        </authorList>
    </citation>
    <scope>NUCLEOTIDE SEQUENCE [LARGE SCALE GENOMIC DNA]</scope>
    <source>
        <strain>PCC 8801 / RF-1</strain>
    </source>
</reference>
<feature type="chain" id="PRO_1000130909" description="Photosystem II reaction center protein Z">
    <location>
        <begin position="1"/>
        <end position="62"/>
    </location>
</feature>
<feature type="transmembrane region" description="Helical" evidence="1">
    <location>
        <begin position="8"/>
        <end position="28"/>
    </location>
</feature>
<feature type="transmembrane region" description="Helical" evidence="1">
    <location>
        <begin position="41"/>
        <end position="61"/>
    </location>
</feature>
<comment type="function">
    <text evidence="1">May control the interaction of photosystem II (PSII) cores with the light-harvesting antenna, regulates electron flow through the 2 photosystem reaction centers. PSII is a light-driven water plastoquinone oxidoreductase, using light energy to abstract electrons from H(2)O, generating a proton gradient subsequently used for ATP formation.</text>
</comment>
<comment type="subunit">
    <text evidence="1">PSII is composed of 1 copy each of membrane proteins PsbA, PsbB, PsbC, PsbD, PsbE, PsbF, PsbH, PsbI, PsbJ, PsbK, PsbL, PsbM, PsbT, PsbX, PsbY, PsbZ, Psb30/Ycf12, peripheral proteins PsbO, CyanoQ (PsbQ), PsbU, PsbV and a large number of cofactors. It forms dimeric complexes.</text>
</comment>
<comment type="subcellular location">
    <subcellularLocation>
        <location evidence="1">Cellular thylakoid membrane</location>
        <topology evidence="1">Multi-pass membrane protein</topology>
    </subcellularLocation>
</comment>
<comment type="similarity">
    <text evidence="1">Belongs to the PsbZ family.</text>
</comment>
<sequence length="62" mass="6837">MSIIFQLALIALVLFSFVMVIGVPVAYASPQNWNQSKPLLYLGSAIWAILVVIVAILNFFVI</sequence>
<name>PSBZ_RIPO1</name>
<proteinExistence type="inferred from homology"/>
<accession>B7K3U2</accession>
<organism>
    <name type="scientific">Rippkaea orientalis (strain PCC 8801 / RF-1)</name>
    <name type="common">Cyanothece sp. (strain PCC 8801)</name>
    <dbReference type="NCBI Taxonomy" id="41431"/>
    <lineage>
        <taxon>Bacteria</taxon>
        <taxon>Bacillati</taxon>
        <taxon>Cyanobacteriota</taxon>
        <taxon>Cyanophyceae</taxon>
        <taxon>Oscillatoriophycideae</taxon>
        <taxon>Chroococcales</taxon>
        <taxon>Aphanothecaceae</taxon>
        <taxon>Rippkaea</taxon>
        <taxon>Rippkaea orientalis</taxon>
    </lineage>
</organism>